<gene>
    <name evidence="1" type="primary">mnmA</name>
    <name type="ordered locus">sync_0759</name>
</gene>
<proteinExistence type="inferred from homology"/>
<feature type="chain" id="PRO_0000349826" description="tRNA-specific 2-thiouridylase MnmA">
    <location>
        <begin position="1"/>
        <end position="391"/>
    </location>
</feature>
<feature type="region of interest" description="Interaction with tRNA" evidence="1">
    <location>
        <begin position="171"/>
        <end position="173"/>
    </location>
</feature>
<feature type="region of interest" description="Interaction with tRNA" evidence="1">
    <location>
        <begin position="328"/>
        <end position="329"/>
    </location>
</feature>
<feature type="active site" description="Nucleophile" evidence="1">
    <location>
        <position position="122"/>
    </location>
</feature>
<feature type="active site" description="Cysteine persulfide intermediate" evidence="1">
    <location>
        <position position="221"/>
    </location>
</feature>
<feature type="binding site" evidence="1">
    <location>
        <begin position="35"/>
        <end position="42"/>
    </location>
    <ligand>
        <name>ATP</name>
        <dbReference type="ChEBI" id="CHEBI:30616"/>
    </ligand>
</feature>
<feature type="binding site" evidence="1">
    <location>
        <position position="61"/>
    </location>
    <ligand>
        <name>ATP</name>
        <dbReference type="ChEBI" id="CHEBI:30616"/>
    </ligand>
</feature>
<feature type="binding site" evidence="1">
    <location>
        <position position="147"/>
    </location>
    <ligand>
        <name>ATP</name>
        <dbReference type="ChEBI" id="CHEBI:30616"/>
    </ligand>
</feature>
<feature type="site" description="Interaction with tRNA" evidence="1">
    <location>
        <position position="148"/>
    </location>
</feature>
<feature type="site" description="Interaction with tRNA" evidence="1">
    <location>
        <position position="371"/>
    </location>
</feature>
<feature type="disulfide bond" description="Alternate" evidence="1">
    <location>
        <begin position="122"/>
        <end position="221"/>
    </location>
</feature>
<name>MNMA_SYNS3</name>
<comment type="function">
    <text evidence="1">Catalyzes the 2-thiolation of uridine at the wobble position (U34) of tRNA, leading to the formation of s(2)U34.</text>
</comment>
<comment type="catalytic activity">
    <reaction evidence="1">
        <text>S-sulfanyl-L-cysteinyl-[protein] + uridine(34) in tRNA + AH2 + ATP = 2-thiouridine(34) in tRNA + L-cysteinyl-[protein] + A + AMP + diphosphate + H(+)</text>
        <dbReference type="Rhea" id="RHEA:47032"/>
        <dbReference type="Rhea" id="RHEA-COMP:10131"/>
        <dbReference type="Rhea" id="RHEA-COMP:11726"/>
        <dbReference type="Rhea" id="RHEA-COMP:11727"/>
        <dbReference type="Rhea" id="RHEA-COMP:11728"/>
        <dbReference type="ChEBI" id="CHEBI:13193"/>
        <dbReference type="ChEBI" id="CHEBI:15378"/>
        <dbReference type="ChEBI" id="CHEBI:17499"/>
        <dbReference type="ChEBI" id="CHEBI:29950"/>
        <dbReference type="ChEBI" id="CHEBI:30616"/>
        <dbReference type="ChEBI" id="CHEBI:33019"/>
        <dbReference type="ChEBI" id="CHEBI:61963"/>
        <dbReference type="ChEBI" id="CHEBI:65315"/>
        <dbReference type="ChEBI" id="CHEBI:87170"/>
        <dbReference type="ChEBI" id="CHEBI:456215"/>
        <dbReference type="EC" id="2.8.1.13"/>
    </reaction>
</comment>
<comment type="subcellular location">
    <subcellularLocation>
        <location evidence="1">Cytoplasm</location>
    </subcellularLocation>
</comment>
<comment type="similarity">
    <text evidence="1">Belongs to the MnmA/TRMU family.</text>
</comment>
<keyword id="KW-0067">ATP-binding</keyword>
<keyword id="KW-0963">Cytoplasm</keyword>
<keyword id="KW-1015">Disulfide bond</keyword>
<keyword id="KW-0547">Nucleotide-binding</keyword>
<keyword id="KW-1185">Reference proteome</keyword>
<keyword id="KW-0694">RNA-binding</keyword>
<keyword id="KW-0808">Transferase</keyword>
<keyword id="KW-0819">tRNA processing</keyword>
<keyword id="KW-0820">tRNA-binding</keyword>
<dbReference type="EC" id="2.8.1.13" evidence="1"/>
<dbReference type="EMBL" id="CP000435">
    <property type="protein sequence ID" value="ABI46133.1"/>
    <property type="molecule type" value="Genomic_DNA"/>
</dbReference>
<dbReference type="SMR" id="Q0IC49"/>
<dbReference type="STRING" id="64471.sync_0759"/>
<dbReference type="KEGG" id="syg:sync_0759"/>
<dbReference type="eggNOG" id="COG0482">
    <property type="taxonomic scope" value="Bacteria"/>
</dbReference>
<dbReference type="HOGENOM" id="CLU_035188_0_0_3"/>
<dbReference type="Proteomes" id="UP000001961">
    <property type="component" value="Chromosome"/>
</dbReference>
<dbReference type="GO" id="GO:0005737">
    <property type="term" value="C:cytoplasm"/>
    <property type="evidence" value="ECO:0007669"/>
    <property type="project" value="UniProtKB-SubCell"/>
</dbReference>
<dbReference type="GO" id="GO:0005524">
    <property type="term" value="F:ATP binding"/>
    <property type="evidence" value="ECO:0007669"/>
    <property type="project" value="UniProtKB-KW"/>
</dbReference>
<dbReference type="GO" id="GO:0000049">
    <property type="term" value="F:tRNA binding"/>
    <property type="evidence" value="ECO:0007669"/>
    <property type="project" value="UniProtKB-KW"/>
</dbReference>
<dbReference type="GO" id="GO:0103016">
    <property type="term" value="F:tRNA-uridine 2-sulfurtransferase activity"/>
    <property type="evidence" value="ECO:0007669"/>
    <property type="project" value="UniProtKB-EC"/>
</dbReference>
<dbReference type="GO" id="GO:0002143">
    <property type="term" value="P:tRNA wobble position uridine thiolation"/>
    <property type="evidence" value="ECO:0007669"/>
    <property type="project" value="TreeGrafter"/>
</dbReference>
<dbReference type="CDD" id="cd01998">
    <property type="entry name" value="MnmA_TRMU-like"/>
    <property type="match status" value="1"/>
</dbReference>
<dbReference type="FunFam" id="2.30.30.280:FF:000001">
    <property type="entry name" value="tRNA-specific 2-thiouridylase MnmA"/>
    <property type="match status" value="1"/>
</dbReference>
<dbReference type="Gene3D" id="2.30.30.280">
    <property type="entry name" value="Adenine nucleotide alpha hydrolases-like domains"/>
    <property type="match status" value="1"/>
</dbReference>
<dbReference type="Gene3D" id="3.40.50.620">
    <property type="entry name" value="HUPs"/>
    <property type="match status" value="1"/>
</dbReference>
<dbReference type="Gene3D" id="2.40.30.10">
    <property type="entry name" value="Translation factors"/>
    <property type="match status" value="1"/>
</dbReference>
<dbReference type="HAMAP" id="MF_00144">
    <property type="entry name" value="tRNA_thiouridyl_MnmA"/>
    <property type="match status" value="1"/>
</dbReference>
<dbReference type="InterPro" id="IPR004506">
    <property type="entry name" value="MnmA-like"/>
</dbReference>
<dbReference type="InterPro" id="IPR046885">
    <property type="entry name" value="MnmA-like_C"/>
</dbReference>
<dbReference type="InterPro" id="IPR046884">
    <property type="entry name" value="MnmA-like_central"/>
</dbReference>
<dbReference type="InterPro" id="IPR023382">
    <property type="entry name" value="MnmA-like_central_sf"/>
</dbReference>
<dbReference type="InterPro" id="IPR014729">
    <property type="entry name" value="Rossmann-like_a/b/a_fold"/>
</dbReference>
<dbReference type="NCBIfam" id="NF001138">
    <property type="entry name" value="PRK00143.1"/>
    <property type="match status" value="1"/>
</dbReference>
<dbReference type="NCBIfam" id="TIGR00420">
    <property type="entry name" value="trmU"/>
    <property type="match status" value="1"/>
</dbReference>
<dbReference type="PANTHER" id="PTHR11933:SF5">
    <property type="entry name" value="MITOCHONDRIAL TRNA-SPECIFIC 2-THIOURIDYLASE 1"/>
    <property type="match status" value="1"/>
</dbReference>
<dbReference type="PANTHER" id="PTHR11933">
    <property type="entry name" value="TRNA 5-METHYLAMINOMETHYL-2-THIOURIDYLATE -METHYLTRANSFERASE"/>
    <property type="match status" value="1"/>
</dbReference>
<dbReference type="Pfam" id="PF03054">
    <property type="entry name" value="tRNA_Me_trans"/>
    <property type="match status" value="1"/>
</dbReference>
<dbReference type="Pfam" id="PF20258">
    <property type="entry name" value="tRNA_Me_trans_C"/>
    <property type="match status" value="1"/>
</dbReference>
<dbReference type="Pfam" id="PF20259">
    <property type="entry name" value="tRNA_Me_trans_M"/>
    <property type="match status" value="1"/>
</dbReference>
<dbReference type="SUPFAM" id="SSF52402">
    <property type="entry name" value="Adenine nucleotide alpha hydrolases-like"/>
    <property type="match status" value="1"/>
</dbReference>
<protein>
    <recommendedName>
        <fullName evidence="1">tRNA-specific 2-thiouridylase MnmA</fullName>
        <ecNumber evidence="1">2.8.1.13</ecNumber>
    </recommendedName>
</protein>
<organism>
    <name type="scientific">Synechococcus sp. (strain CC9311)</name>
    <dbReference type="NCBI Taxonomy" id="64471"/>
    <lineage>
        <taxon>Bacteria</taxon>
        <taxon>Bacillati</taxon>
        <taxon>Cyanobacteriota</taxon>
        <taxon>Cyanophyceae</taxon>
        <taxon>Synechococcales</taxon>
        <taxon>Synechococcaceae</taxon>
        <taxon>Synechococcus</taxon>
    </lineage>
</organism>
<reference key="1">
    <citation type="journal article" date="2006" name="Proc. Natl. Acad. Sci. U.S.A.">
        <title>Genome sequence of Synechococcus CC9311: insights into adaptation to a coastal environment.</title>
        <authorList>
            <person name="Palenik B."/>
            <person name="Ren Q."/>
            <person name="Dupont C.L."/>
            <person name="Myers G.S."/>
            <person name="Heidelberg J.F."/>
            <person name="Badger J.H."/>
            <person name="Madupu R."/>
            <person name="Nelson W.C."/>
            <person name="Brinkac L.M."/>
            <person name="Dodson R.J."/>
            <person name="Durkin A.S."/>
            <person name="Daugherty S.C."/>
            <person name="Sullivan S.A."/>
            <person name="Khouri H."/>
            <person name="Mohamoud Y."/>
            <person name="Halpin R."/>
            <person name="Paulsen I.T."/>
        </authorList>
    </citation>
    <scope>NUCLEOTIDE SEQUENCE [LARGE SCALE GENOMIC DNA]</scope>
    <source>
        <strain>CC9311</strain>
    </source>
</reference>
<sequence length="391" mass="42680">MSAEAKMTTSTATQAGAEALERLRQWPGEHRVAVGLSGGVDSSLTAALMVEAGWEVEGLTLWLMSGKGACCAEGLVDAAGICQQLGVPHHVVDSRDTFVREIVQGLVDGYRAGITPLPCSKCNRSVKFGPMLAWAEQERNLPRIATGHYARIRLDREDGRWKLLRGLDRRKDQSYFLYDLPQEVLARVVFPLGELTKADTRLEAGRHGLRTADKPESQDLCLADHHGSMRAFLDAYIPPRDGEIVLQDGTVVGQHDGIEHFTIGQRKGLGIAWSEPLHVVKLDAAMNQVVVATRAEAGRTGCEVGAMNWVSIAPPPLDSPMEVEVQVRYRSEPVRAHLICIEATANDRAKERPHRCKLTFQEPQFSITPGQGAVLYDGEVVLGGGLIDSPV</sequence>
<accession>Q0IC49</accession>
<evidence type="ECO:0000255" key="1">
    <source>
        <dbReference type="HAMAP-Rule" id="MF_00144"/>
    </source>
</evidence>